<protein>
    <recommendedName>
        <fullName evidence="14">Aldehyde oxidase 1</fullName>
        <ecNumber evidence="1">1.2.3.1</ecNumber>
    </recommendedName>
    <alternativeName>
        <fullName evidence="12">Azaheterocycle hydroxylase 1</fullName>
        <ecNumber evidence="8">1.17.3.-</ecNumber>
    </alternativeName>
</protein>
<gene>
    <name evidence="14" type="primary">Aox1</name>
    <name type="synonym">Ao</name>
</gene>
<accession>Q9Z0U5</accession>
<accession>Q9R240</accession>
<organism>
    <name type="scientific">Rattus norvegicus</name>
    <name type="common">Rat</name>
    <dbReference type="NCBI Taxonomy" id="10116"/>
    <lineage>
        <taxon>Eukaryota</taxon>
        <taxon>Metazoa</taxon>
        <taxon>Chordata</taxon>
        <taxon>Craniata</taxon>
        <taxon>Vertebrata</taxon>
        <taxon>Euteleostomi</taxon>
        <taxon>Mammalia</taxon>
        <taxon>Eutheria</taxon>
        <taxon>Euarchontoglires</taxon>
        <taxon>Glires</taxon>
        <taxon>Rodentia</taxon>
        <taxon>Myomorpha</taxon>
        <taxon>Muroidea</taxon>
        <taxon>Muridae</taxon>
        <taxon>Murinae</taxon>
        <taxon>Rattus</taxon>
    </lineage>
</organism>
<sequence>MDPPQLLFYVNGQKVVENNVDPEMMLLPYLRKNLRLTGTKYGCGGGGCGACTVMISRYNPSTKSIRHHPVNACLTPICSLYGTAVTTVEGIGNTRTRLHPVQERIAKCHSTQCGFCTPGMVMSMYALLRNHPEPSLDQLTDALGGNLCRCTGYRPIIDACKTFCRASGCCESKENGVCCLDQGINGSAEFQEGDETSPELFSEKEFQPLDPTQELIFPPELMRIAEKQPPKTRVFYSNRMTWISPVTLEELVEAKFKYPGAPIVMGYTSVGPEVKFKGVFHPIIISPDRIEELSIINQTGDGLTLGAGLSLDQVKDILTDVVQKLPEETTQTYRALLKHLRTLAGSQIRNMASLGGHIVSRHLDSDLNPLLAVGNCTLNLLSKDGKRQIPLSEQFLRKCPDSDLKPQEVLVSVNIPCSRKWEFVSAFRQAQRQQNALAIVNSGMRVLFREGGGVIKELSILYGGVGPTTIGAKNSCQKLIGRPWNEEMLDTACRLVLDEVTLAGSAPGGKVEFKRTLIISFLFKFYLEVLQGLKREDPGHYPSLTNNYESALEDLHSKHHWRTLTHQNVDSMQLPQDPIGRPIMHLSGIKHATGEAIYCDDMPAVDRELFLTFVTSSRAHAKIVSIDLSEALSLPGVVDIITADHLQDATTFGTETLLATDKVHCVGQLVCAVIADSETRAKQAAKHVKVVYRDLEPLILTIEEAIQHKSFFESERKLECGNVDEAFKIADQILEGEIHIGGQEHFYMETQSMLVVPKGEDGEIDIYVSTQFPKHIQDIVAATLKLSVNKVMCHVRRVGGAFGGKVGKTSIMAAITAFAASKHGRAVRCTLERGEDMLITGGRHPYLGKYKVGFMRDGRIVALDVEHYCNGGSSLDESLWVIEMGLLKMDNAYKFPNLRCRGWACRTNLPSHTALRGFGFPQAGLVTEACVTEVAIRCGLSPEQVRTINMYKQIDNTHYKQEFSAKTLFECWRECMAKCSYSERKTAVGKFNAENSWKKRGMAVIPLKFPVGVGSVAMGQAAALVHIYLDGSALVSHGGIEMGQGVHTKMIQVVSRELKMPMSSVHLRGTSTETVPNTNASGGSVVADLNGLAVKDACQTLLKRLEPIISKNPQGTWKDWAQTAFDQSVSLSAVGYFRGYESNINWEKGEGHPFEYFVYGAACSEVEIDCLTGDHKNIRTDIVMDVGHSINPALDIGQVEGAFIQGMGLYTIEELSYSPQGILYSRGPNQYKIPAICDIPTEMHISFLPPSEHSNTLYSSKGLGESGVFLGCSVFFAIHDAVRAARQERGISGPWKLTSPLTPEKIRMACEDKFTKMIPRDEPGSYVPWNIPV</sequence>
<comment type="function">
    <text evidence="5 6 7 8 9">Oxidase with broad substrate specificity, oxidizing aromatic azaheterocycles, such as N1-methylnicotinamide, N-methylphthalazinium and phthalazine, as well as aldehydes, such as benzaldehyde, retinal, pyridoxal, and vanillin. Plays a role in the metabolism of xenobiotics and drugs containing aromatic azaheterocyclic substituents. Participates in the bioactivation of prodrugs such as famciclovir, catalyzing the oxidation step from 6-deoxypenciclovir to penciclovir, which is a potent antiviral agent. Is probably involved in the regulation of reactive oxygen species homeostasis. Is a prominent source of superoxide generation via the one-electron reduction of molecular oxygen. Also catalyzes nitric oxide (NO) production; under anaerobic conditions, reduces nitrite to NO with NADH or aldehyde as electron donor, but under aerobic conditions, NADH is the preferred substrate. These reactions may be catalyzed by several isozymes. May play a role in adipogenesis.</text>
</comment>
<comment type="catalytic activity">
    <reaction evidence="1">
        <text>an aldehyde + O2 + H2O = a carboxylate + H2O2 + H(+)</text>
        <dbReference type="Rhea" id="RHEA:16829"/>
        <dbReference type="ChEBI" id="CHEBI:15377"/>
        <dbReference type="ChEBI" id="CHEBI:15378"/>
        <dbReference type="ChEBI" id="CHEBI:15379"/>
        <dbReference type="ChEBI" id="CHEBI:16240"/>
        <dbReference type="ChEBI" id="CHEBI:17478"/>
        <dbReference type="ChEBI" id="CHEBI:29067"/>
        <dbReference type="EC" id="1.2.3.1"/>
    </reaction>
</comment>
<comment type="catalytic activity">
    <reaction evidence="1">
        <text>retinal + O2 + H2O = retinoate + H2O2 + H(+)</text>
        <dbReference type="Rhea" id="RHEA:56736"/>
        <dbReference type="ChEBI" id="CHEBI:15035"/>
        <dbReference type="ChEBI" id="CHEBI:15036"/>
        <dbReference type="ChEBI" id="CHEBI:15377"/>
        <dbReference type="ChEBI" id="CHEBI:15378"/>
        <dbReference type="ChEBI" id="CHEBI:15379"/>
        <dbReference type="ChEBI" id="CHEBI:16240"/>
    </reaction>
</comment>
<comment type="cofactor">
    <cofactor evidence="5">
        <name>[2Fe-2S] cluster</name>
        <dbReference type="ChEBI" id="CHEBI:190135"/>
    </cofactor>
    <text evidence="5">Binds 2 [2Fe-2S] clusters per subunit.</text>
</comment>
<comment type="cofactor">
    <cofactor evidence="5">
        <name>FAD</name>
        <dbReference type="ChEBI" id="CHEBI:57692"/>
    </cofactor>
    <text evidence="5">Binds 1 FAD per subunit.</text>
</comment>
<comment type="cofactor">
    <cofactor evidence="1">
        <name>Mo-molybdopterin</name>
        <dbReference type="ChEBI" id="CHEBI:71302"/>
    </cofactor>
    <text evidence="1">Binds 1 Mo-molybdopterin (Mo-MPT) cofactor per subunit.</text>
</comment>
<comment type="activity regulation">
    <text evidence="6 7 8">Inhibited by menadione and isovanillin. Not inhibited by allopurinol, a xanthine dehydrogenase potent inhibitor. Inhibited by the flavonoids quercetin, myricetin and genistein. Nitric oxide generation is inhibited by raloxifene and competitively inhibited by an increase in oxygen levels.</text>
</comment>
<comment type="biophysicochemical properties">
    <kinetics>
        <KM evidence="8">0.37 mM for 6-deoxypenciclovir (at 37 degrees Celsius and pH 7)</KM>
        <KM evidence="8">0.08 mM for famciclovir (at 37 degrees Celsius and pH 7)</KM>
        <KM evidence="6">3 mM for nitrite</KM>
        <KM evidence="6">24 uM for NADH</KM>
        <KM evidence="6">9.6 uM for 4-(dimethylamino)cinnamaldehyde</KM>
        <Vmax evidence="8">26.0 nmol/min/mg enzyme with 6-deoxypenciclovir as substrate</Vmax>
        <Vmax evidence="8">41.0 nmol/min/mg enzyme with famciclovir as substrate</Vmax>
        <Vmax evidence="6">0.85 umol/sec/mg enzyme for nitrite reduction with NADH as electron donor</Vmax>
        <Vmax evidence="6">1.35 umol/sec/mg enzyme for nitrite reduction with 4-(dimethylamino)cinnamaldehyde as electron donor</Vmax>
    </kinetics>
    <phDependence>
        <text evidence="6">Optimum pH is 6.0 for nitrite oxide generation. Activity decreases below pH 5.0 and above pH 8.0 (PubMed:19801639).</text>
    </phDependence>
</comment>
<comment type="subunit">
    <text evidence="5">Homodimer.</text>
</comment>
<comment type="subcellular location">
    <subcellularLocation>
        <location evidence="5">Cytoplasm</location>
    </subcellularLocation>
</comment>
<comment type="tissue specificity">
    <text evidence="5 9">Expression in liver (at protein level). Also detected in heart, lung, spleen and kidney.</text>
</comment>
<comment type="PTM">
    <text>The N-terminus is blocked.</text>
</comment>
<comment type="polymorphism">
    <text evidence="9">The sequence variants between males and females could be due to differences between individual animals, reflect gender differences or arise from technical problems (PubMed:9920943). The sequence shown here is that of a Sprague-Dawley female.</text>
</comment>
<comment type="miscellaneous">
    <text evidence="13">Male and female rats possess kinetically distinct forms which may be due to differences in redox states.</text>
</comment>
<comment type="miscellaneous">
    <text evidence="11">AOX genes evolved from a xanthine oxidoreductase ancestral precursor via a series of gene duplication and suppression/deletion events. Different animal species contain a different complement of AOX genes encoding an equivalent number of AOX isoenzymes. In mammals, the two extremes are represented by certain rodents such as mice and rats, which are endowed with 4 AOX genes, and by humans, whose genome is characterized by a single active gene (PubMed:23263164).</text>
</comment>
<comment type="similarity">
    <text evidence="10">Belongs to the xanthine dehydrogenase family.</text>
</comment>
<comment type="caution">
    <text evidence="10">The experimental design does not allow to distinguish AOX1 from AOX3 in rat liver as the effector of the superoxide and nitric oxide production (PubMed:17353002, PubMed:19801639).</text>
</comment>
<feature type="chain" id="PRO_0000166108" description="Aldehyde oxidase 1">
    <location>
        <begin position="1"/>
        <end position="1333"/>
    </location>
</feature>
<feature type="domain" description="2Fe-2S ferredoxin-type" evidence="3">
    <location>
        <begin position="4"/>
        <end position="91"/>
    </location>
</feature>
<feature type="domain" description="FAD-binding PCMH-type" evidence="4">
    <location>
        <begin position="235"/>
        <end position="420"/>
    </location>
</feature>
<feature type="active site" description="Proton acceptor; for azaheterocycle hydroxylase activity" evidence="1">
    <location>
        <position position="1265"/>
    </location>
</feature>
<feature type="binding site" evidence="2">
    <location>
        <position position="43"/>
    </location>
    <ligand>
        <name>[2Fe-2S] cluster</name>
        <dbReference type="ChEBI" id="CHEBI:190135"/>
        <label>1</label>
    </ligand>
</feature>
<feature type="binding site" evidence="2">
    <location>
        <position position="48"/>
    </location>
    <ligand>
        <name>[2Fe-2S] cluster</name>
        <dbReference type="ChEBI" id="CHEBI:190135"/>
        <label>1</label>
    </ligand>
</feature>
<feature type="binding site" evidence="2">
    <location>
        <position position="51"/>
    </location>
    <ligand>
        <name>[2Fe-2S] cluster</name>
        <dbReference type="ChEBI" id="CHEBI:190135"/>
        <label>1</label>
    </ligand>
</feature>
<feature type="binding site" evidence="2">
    <location>
        <position position="73"/>
    </location>
    <ligand>
        <name>[2Fe-2S] cluster</name>
        <dbReference type="ChEBI" id="CHEBI:190135"/>
        <label>1</label>
    </ligand>
</feature>
<feature type="binding site" evidence="2">
    <location>
        <position position="112"/>
    </location>
    <ligand>
        <name>Mo-molybdopterin</name>
        <dbReference type="ChEBI" id="CHEBI:71302"/>
    </ligand>
</feature>
<feature type="binding site" evidence="2">
    <location>
        <position position="113"/>
    </location>
    <ligand>
        <name>[2Fe-2S] cluster</name>
        <dbReference type="ChEBI" id="CHEBI:190135"/>
        <label>2</label>
    </ligand>
</feature>
<feature type="binding site" evidence="2">
    <location>
        <position position="116"/>
    </location>
    <ligand>
        <name>[2Fe-2S] cluster</name>
        <dbReference type="ChEBI" id="CHEBI:190135"/>
        <label>2</label>
    </ligand>
</feature>
<feature type="binding site" evidence="2">
    <location>
        <position position="148"/>
    </location>
    <ligand>
        <name>[2Fe-2S] cluster</name>
        <dbReference type="ChEBI" id="CHEBI:190135"/>
        <label>2</label>
    </ligand>
</feature>
<feature type="binding site" evidence="2">
    <location>
        <position position="150"/>
    </location>
    <ligand>
        <name>[2Fe-2S] cluster</name>
        <dbReference type="ChEBI" id="CHEBI:190135"/>
        <label>2</label>
    </ligand>
</feature>
<feature type="binding site" evidence="2">
    <location>
        <position position="150"/>
    </location>
    <ligand>
        <name>Mo-molybdopterin</name>
        <dbReference type="ChEBI" id="CHEBI:71302"/>
    </ligand>
</feature>
<feature type="binding site" evidence="2">
    <location>
        <begin position="263"/>
        <end position="270"/>
    </location>
    <ligand>
        <name>FAD</name>
        <dbReference type="ChEBI" id="CHEBI:57692"/>
    </ligand>
</feature>
<feature type="binding site" evidence="2">
    <location>
        <position position="344"/>
    </location>
    <ligand>
        <name>FAD</name>
        <dbReference type="ChEBI" id="CHEBI:57692"/>
    </ligand>
</feature>
<feature type="binding site" evidence="2">
    <location>
        <position position="353"/>
    </location>
    <ligand>
        <name>FAD</name>
        <dbReference type="ChEBI" id="CHEBI:57692"/>
    </ligand>
</feature>
<feature type="binding site" evidence="2">
    <location>
        <position position="357"/>
    </location>
    <ligand>
        <name>FAD</name>
        <dbReference type="ChEBI" id="CHEBI:57692"/>
    </ligand>
</feature>
<feature type="binding site" evidence="2">
    <location>
        <position position="366"/>
    </location>
    <ligand>
        <name>FAD</name>
        <dbReference type="ChEBI" id="CHEBI:57692"/>
    </ligand>
</feature>
<feature type="binding site" evidence="2">
    <location>
        <position position="410"/>
    </location>
    <ligand>
        <name>FAD</name>
        <dbReference type="ChEBI" id="CHEBI:57692"/>
    </ligand>
</feature>
<feature type="binding site" evidence="2">
    <location>
        <begin position="801"/>
        <end position="802"/>
    </location>
    <ligand>
        <name>Mo-molybdopterin</name>
        <dbReference type="ChEBI" id="CHEBI:71302"/>
    </ligand>
</feature>
<feature type="binding site" evidence="2">
    <location>
        <position position="1042"/>
    </location>
    <ligand>
        <name>Mo-molybdopterin</name>
        <dbReference type="ChEBI" id="CHEBI:71302"/>
    </ligand>
</feature>
<feature type="binding site" evidence="2">
    <location>
        <begin position="1083"/>
        <end position="1086"/>
    </location>
    <ligand>
        <name>Mo-molybdopterin</name>
        <dbReference type="ChEBI" id="CHEBI:71302"/>
    </ligand>
</feature>
<feature type="binding site" evidence="2">
    <location>
        <position position="1198"/>
    </location>
    <ligand>
        <name>Mo-molybdopterin</name>
        <dbReference type="ChEBI" id="CHEBI:71302"/>
    </ligand>
</feature>
<feature type="binding site" evidence="2">
    <location>
        <position position="1263"/>
    </location>
    <ligand>
        <name>Mo-molybdopterin</name>
        <dbReference type="ChEBI" id="CHEBI:71302"/>
    </ligand>
</feature>
<feature type="modified residue" description="Phosphoserine" evidence="2">
    <location>
        <position position="1063"/>
    </location>
</feature>
<feature type="sequence variant" description="In Sprague-Dawley males; could be unrelated to gender." evidence="9">
    <original>GM</original>
    <variation>AR</variation>
    <location>
        <begin position="119"/>
        <end position="120"/>
    </location>
</feature>
<feature type="sequence variant" description="In Sprague-Dawley males; could be unrelated to gender." evidence="9">
    <original>A</original>
    <variation>T</variation>
    <location>
        <position position="649"/>
    </location>
</feature>
<feature type="sequence variant" description="In Sprague-Dawley males; could be unrelated to gender." evidence="9">
    <original>F</original>
    <variation>L</variation>
    <location>
        <position position="1276"/>
    </location>
</feature>
<feature type="sequence variant" description="In Sprague-Dawley males; could be unrelated to gender." evidence="9">
    <original>T</original>
    <variation>R</variation>
    <location>
        <position position="1315"/>
    </location>
</feature>
<keyword id="KW-0001">2Fe-2S</keyword>
<keyword id="KW-0963">Cytoplasm</keyword>
<keyword id="KW-0274">FAD</keyword>
<keyword id="KW-0285">Flavoprotein</keyword>
<keyword id="KW-0408">Iron</keyword>
<keyword id="KW-0411">Iron-sulfur</keyword>
<keyword id="KW-0443">Lipid metabolism</keyword>
<keyword id="KW-0479">Metal-binding</keyword>
<keyword id="KW-0500">Molybdenum</keyword>
<keyword id="KW-0560">Oxidoreductase</keyword>
<keyword id="KW-0597">Phosphoprotein</keyword>
<keyword id="KW-1185">Reference proteome</keyword>
<proteinExistence type="evidence at protein level"/>
<reference key="1">
    <citation type="journal article" date="1999" name="J. Biol. Chem.">
        <title>cDNA cloning, sequencing, and characterization of male and female rat liver aldehyde oxidase (rAOX1). Differences in redox status may distinguish male and female forms of hepatic APX.</title>
        <authorList>
            <person name="Wright R.M."/>
            <person name="Clayton D.A."/>
            <person name="Riley M.G."/>
            <person name="McManaman J.L."/>
            <person name="Repine J.E."/>
        </authorList>
    </citation>
    <scope>NUCLEOTIDE SEQUENCE [MRNA]</scope>
    <scope>FUNCTION</scope>
    <scope>TISSUE SPECIFICITY</scope>
    <scope>BLOCKAGE OF N-TERMINUS</scope>
    <scope>HOMODIMER</scope>
    <scope>VARIANTS 119-GLY-MET-120 DELINS ALA-ARG; THR-649; LEU-1276 AND ARG-1315</scope>
    <source>
        <strain>Sprague-Dawley</strain>
        <tissue>Liver</tissue>
    </source>
</reference>
<reference key="2">
    <citation type="journal article" date="1997" name="Drug Metab. Dispos.">
        <title>In vitro oxidation of famciclovir and 6-deoxypenciclovir by aldehyde oxidase from human, guinea pig, rabbit, and rat liver.</title>
        <authorList>
            <person name="Rashidi M.R."/>
            <person name="Smith J.A."/>
            <person name="Clarke S.E."/>
            <person name="Beedham C."/>
        </authorList>
    </citation>
    <scope>FUNCTION AS AZAHETEROCYCLE OXIDASE</scope>
    <scope>CATALYTIC ACTIVITY</scope>
    <scope>ACTIVITY REGULATION</scope>
    <scope>KINETIC PARAMETERS</scope>
</reference>
<reference key="3">
    <citation type="journal article" date="2007" name="Arch. Biochem. Biophys.">
        <title>Characterization of superoxide production from aldehyde oxidase: an important source of oxidants in biological tissues.</title>
        <authorList>
            <person name="Kundu T.K."/>
            <person name="Hille R."/>
            <person name="Velayutham M."/>
            <person name="Zweier J.L."/>
        </authorList>
    </citation>
    <scope>FUNCTION IN SUPEROXIDE PRODUCTION</scope>
    <scope>TISSUE SPECIFICITY</scope>
    <scope>SUBCELLULAR LOCATION</scope>
    <scope>HOMODIMER</scope>
    <scope>COFACTOR</scope>
</reference>
<reference key="4">
    <citation type="journal article" date="2009" name="J. Biol. Chem.">
        <title>Characterization of the magnitude and mechanism of aldehyde oxidase-mediated nitric oxide production from nitrite.</title>
        <authorList>
            <person name="Li H."/>
            <person name="Kundu T.K."/>
            <person name="Zweier J.L."/>
        </authorList>
    </citation>
    <scope>FUNCTION IN NITRIC OXIDE PRODUCTION</scope>
    <scope>BIOPHYSICOCHEMICAL PROPERTIES</scope>
    <scope>ACTIVITY REGULATION</scope>
</reference>
<reference key="5">
    <citation type="journal article" date="2013" name="Cell. Mol. Life Sci.">
        <title>Structure and evolution of vertebrate aldehyde oxidases: from gene duplication to gene suppression.</title>
        <authorList>
            <person name="Kurosaki M."/>
            <person name="Bolis M."/>
            <person name="Fratelli M."/>
            <person name="Barzago M.M."/>
            <person name="Pattini L."/>
            <person name="Perretta G."/>
            <person name="Terao M."/>
            <person name="Garattini E."/>
        </authorList>
    </citation>
    <scope>IDENTIFICATION OF PARALOGS</scope>
</reference>
<reference key="6">
    <citation type="journal article" date="2013" name="Xenobiotica">
        <title>Structure-based investigation of rat aldehyde oxidase inhibition by flavonoids.</title>
        <authorList>
            <person name="Hamzeh-Mivehroud M."/>
            <person name="Rahmani S."/>
            <person name="Rashidi M.R."/>
            <person name="Hosseinpour Feizi M.A."/>
            <person name="Dastmalchi S."/>
        </authorList>
    </citation>
    <scope>FUNCTION</scope>
    <scope>ACTIVITY REGULATION</scope>
</reference>
<name>AOXA_RAT</name>
<evidence type="ECO:0000250" key="1">
    <source>
        <dbReference type="UniProtKB" id="O54754"/>
    </source>
</evidence>
<evidence type="ECO:0000250" key="2">
    <source>
        <dbReference type="UniProtKB" id="Q06278"/>
    </source>
</evidence>
<evidence type="ECO:0000255" key="3">
    <source>
        <dbReference type="PROSITE-ProRule" id="PRU00465"/>
    </source>
</evidence>
<evidence type="ECO:0000255" key="4">
    <source>
        <dbReference type="PROSITE-ProRule" id="PRU00718"/>
    </source>
</evidence>
<evidence type="ECO:0000269" key="5">
    <source>
    </source>
</evidence>
<evidence type="ECO:0000269" key="6">
    <source>
    </source>
</evidence>
<evidence type="ECO:0000269" key="7">
    <source>
    </source>
</evidence>
<evidence type="ECO:0000269" key="8">
    <source>
    </source>
</evidence>
<evidence type="ECO:0000269" key="9">
    <source>
    </source>
</evidence>
<evidence type="ECO:0000305" key="10"/>
<evidence type="ECO:0000305" key="11">
    <source>
    </source>
</evidence>
<evidence type="ECO:0000305" key="12">
    <source>
    </source>
</evidence>
<evidence type="ECO:0000305" key="13">
    <source>
    </source>
</evidence>
<evidence type="ECO:0000312" key="14">
    <source>
        <dbReference type="RGD" id="620528"/>
    </source>
</evidence>
<dbReference type="EC" id="1.2.3.1" evidence="1"/>
<dbReference type="EC" id="1.17.3.-" evidence="8"/>
<dbReference type="EMBL" id="AF110477">
    <property type="protein sequence ID" value="AAD16999.1"/>
    <property type="molecule type" value="mRNA"/>
</dbReference>
<dbReference type="EMBL" id="AF110478">
    <property type="protein sequence ID" value="AAD17000.1"/>
    <property type="molecule type" value="mRNA"/>
</dbReference>
<dbReference type="RefSeq" id="NP_062236.2">
    <property type="nucleotide sequence ID" value="NM_019363.3"/>
</dbReference>
<dbReference type="SMR" id="Q9Z0U5"/>
<dbReference type="FunCoup" id="Q9Z0U5">
    <property type="interactions" value="159"/>
</dbReference>
<dbReference type="STRING" id="10116.ENSRNOP00000059651"/>
<dbReference type="BindingDB" id="Q9Z0U5"/>
<dbReference type="ChEMBL" id="CHEMBL1641355"/>
<dbReference type="GlyGen" id="Q9Z0U5">
    <property type="glycosylation" value="1 site"/>
</dbReference>
<dbReference type="iPTMnet" id="Q9Z0U5"/>
<dbReference type="PhosphoSitePlus" id="Q9Z0U5"/>
<dbReference type="PaxDb" id="10116-ENSRNOP00000059651"/>
<dbReference type="GeneID" id="54349"/>
<dbReference type="KEGG" id="rno:54349"/>
<dbReference type="UCSC" id="RGD:620528">
    <property type="organism name" value="rat"/>
</dbReference>
<dbReference type="AGR" id="RGD:620528"/>
<dbReference type="CTD" id="316"/>
<dbReference type="RGD" id="620528">
    <property type="gene designation" value="Aox1"/>
</dbReference>
<dbReference type="eggNOG" id="KOG0430">
    <property type="taxonomic scope" value="Eukaryota"/>
</dbReference>
<dbReference type="InParanoid" id="Q9Z0U5"/>
<dbReference type="PhylomeDB" id="Q9Z0U5"/>
<dbReference type="BRENDA" id="1.2.3.1">
    <property type="organism ID" value="5301"/>
</dbReference>
<dbReference type="Reactome" id="R-RNO-964975">
    <property type="pathway name" value="Vitamin B6 activation to pyridoxal phosphate"/>
</dbReference>
<dbReference type="SABIO-RK" id="Q9Z0U5"/>
<dbReference type="PRO" id="PR:Q9Z0U5"/>
<dbReference type="Proteomes" id="UP000002494">
    <property type="component" value="Unplaced"/>
</dbReference>
<dbReference type="GO" id="GO:0005829">
    <property type="term" value="C:cytosol"/>
    <property type="evidence" value="ECO:0000250"/>
    <property type="project" value="UniProtKB"/>
</dbReference>
<dbReference type="GO" id="GO:0051537">
    <property type="term" value="F:2 iron, 2 sulfur cluster binding"/>
    <property type="evidence" value="ECO:0000250"/>
    <property type="project" value="UniProtKB"/>
</dbReference>
<dbReference type="GO" id="GO:0004031">
    <property type="term" value="F:aldehyde oxidase activity"/>
    <property type="evidence" value="ECO:0000314"/>
    <property type="project" value="RGD"/>
</dbReference>
<dbReference type="GO" id="GO:0071949">
    <property type="term" value="F:FAD binding"/>
    <property type="evidence" value="ECO:0007669"/>
    <property type="project" value="InterPro"/>
</dbReference>
<dbReference type="GO" id="GO:0050660">
    <property type="term" value="F:flavin adenine dinucleotide binding"/>
    <property type="evidence" value="ECO:0000250"/>
    <property type="project" value="UniProtKB"/>
</dbReference>
<dbReference type="GO" id="GO:0042802">
    <property type="term" value="F:identical protein binding"/>
    <property type="evidence" value="ECO:0000266"/>
    <property type="project" value="RGD"/>
</dbReference>
<dbReference type="GO" id="GO:0005506">
    <property type="term" value="F:iron ion binding"/>
    <property type="evidence" value="ECO:0000250"/>
    <property type="project" value="UniProtKB"/>
</dbReference>
<dbReference type="GO" id="GO:0043546">
    <property type="term" value="F:molybdopterin cofactor binding"/>
    <property type="evidence" value="ECO:0000250"/>
    <property type="project" value="UniProtKB"/>
</dbReference>
<dbReference type="GO" id="GO:0051287">
    <property type="term" value="F:NAD binding"/>
    <property type="evidence" value="ECO:0007669"/>
    <property type="project" value="InterPro"/>
</dbReference>
<dbReference type="GO" id="GO:0042803">
    <property type="term" value="F:protein homodimerization activity"/>
    <property type="evidence" value="ECO:0000250"/>
    <property type="project" value="UniProtKB"/>
</dbReference>
<dbReference type="GO" id="GO:0006629">
    <property type="term" value="P:lipid metabolic process"/>
    <property type="evidence" value="ECO:0007669"/>
    <property type="project" value="UniProtKB-KW"/>
</dbReference>
<dbReference type="GO" id="GO:0006805">
    <property type="term" value="P:xenobiotic metabolic process"/>
    <property type="evidence" value="ECO:0000250"/>
    <property type="project" value="UniProtKB"/>
</dbReference>
<dbReference type="FunFam" id="1.10.150.120:FF:000001">
    <property type="entry name" value="Aldehyde oxidase 1"/>
    <property type="match status" value="1"/>
</dbReference>
<dbReference type="FunFam" id="3.10.20.30:FF:000015">
    <property type="entry name" value="Aldehyde oxidase 1"/>
    <property type="match status" value="1"/>
</dbReference>
<dbReference type="FunFam" id="3.30.365.10:FF:000003">
    <property type="entry name" value="Aldehyde oxidase 1"/>
    <property type="match status" value="1"/>
</dbReference>
<dbReference type="FunFam" id="3.90.1170.50:FF:000001">
    <property type="entry name" value="Aldehyde oxidase 1"/>
    <property type="match status" value="1"/>
</dbReference>
<dbReference type="FunFam" id="3.30.365.10:FF:000001">
    <property type="entry name" value="Xanthine dehydrogenase oxidase"/>
    <property type="match status" value="1"/>
</dbReference>
<dbReference type="FunFam" id="3.30.365.10:FF:000004">
    <property type="entry name" value="Xanthine dehydrogenase oxidase"/>
    <property type="match status" value="1"/>
</dbReference>
<dbReference type="FunFam" id="3.30.390.50:FF:000001">
    <property type="entry name" value="Xanthine dehydrogenase oxidase"/>
    <property type="match status" value="1"/>
</dbReference>
<dbReference type="FunFam" id="3.30.43.10:FF:000001">
    <property type="entry name" value="Xanthine dehydrogenase/oxidase"/>
    <property type="match status" value="1"/>
</dbReference>
<dbReference type="FunFam" id="3.30.465.10:FF:000004">
    <property type="entry name" value="Xanthine dehydrogenase/oxidase"/>
    <property type="match status" value="1"/>
</dbReference>
<dbReference type="Gene3D" id="3.10.20.30">
    <property type="match status" value="1"/>
</dbReference>
<dbReference type="Gene3D" id="3.30.465.10">
    <property type="match status" value="1"/>
</dbReference>
<dbReference type="Gene3D" id="1.10.150.120">
    <property type="entry name" value="[2Fe-2S]-binding domain"/>
    <property type="match status" value="1"/>
</dbReference>
<dbReference type="Gene3D" id="3.90.1170.50">
    <property type="entry name" value="Aldehyde oxidase/xanthine dehydrogenase, a/b hammerhead"/>
    <property type="match status" value="1"/>
</dbReference>
<dbReference type="Gene3D" id="3.30.365.10">
    <property type="entry name" value="Aldehyde oxidase/xanthine dehydrogenase, molybdopterin binding domain"/>
    <property type="match status" value="4"/>
</dbReference>
<dbReference type="Gene3D" id="3.30.390.50">
    <property type="entry name" value="CO dehydrogenase flavoprotein, C-terminal domain"/>
    <property type="match status" value="1"/>
</dbReference>
<dbReference type="Gene3D" id="3.30.43.10">
    <property type="entry name" value="Uridine Diphospho-n-acetylenolpyruvylglucosamine Reductase, domain 2"/>
    <property type="match status" value="1"/>
</dbReference>
<dbReference type="InterPro" id="IPR002888">
    <property type="entry name" value="2Fe-2S-bd"/>
</dbReference>
<dbReference type="InterPro" id="IPR036884">
    <property type="entry name" value="2Fe-2S-bd_dom_sf"/>
</dbReference>
<dbReference type="InterPro" id="IPR036010">
    <property type="entry name" value="2Fe-2S_ferredoxin-like_sf"/>
</dbReference>
<dbReference type="InterPro" id="IPR001041">
    <property type="entry name" value="2Fe-2S_ferredoxin-type"/>
</dbReference>
<dbReference type="InterPro" id="IPR006058">
    <property type="entry name" value="2Fe2S_fd_BS"/>
</dbReference>
<dbReference type="InterPro" id="IPR000674">
    <property type="entry name" value="Ald_Oxase/Xan_DH_a/b"/>
</dbReference>
<dbReference type="InterPro" id="IPR036856">
    <property type="entry name" value="Ald_Oxase/Xan_DH_a/b_sf"/>
</dbReference>
<dbReference type="InterPro" id="IPR016208">
    <property type="entry name" value="Ald_Oxase/xanthine_DH-like"/>
</dbReference>
<dbReference type="InterPro" id="IPR014313">
    <property type="entry name" value="Aldehyde_oxidase"/>
</dbReference>
<dbReference type="InterPro" id="IPR008274">
    <property type="entry name" value="AldOxase/xan_DH_MoCoBD1"/>
</dbReference>
<dbReference type="InterPro" id="IPR046867">
    <property type="entry name" value="AldOxase/xan_DH_MoCoBD2"/>
</dbReference>
<dbReference type="InterPro" id="IPR037165">
    <property type="entry name" value="AldOxase/xan_DH_Mopterin-bd_sf"/>
</dbReference>
<dbReference type="InterPro" id="IPR012675">
    <property type="entry name" value="Beta-grasp_dom_sf"/>
</dbReference>
<dbReference type="InterPro" id="IPR005107">
    <property type="entry name" value="CO_DH_flav_C"/>
</dbReference>
<dbReference type="InterPro" id="IPR036683">
    <property type="entry name" value="CO_DH_flav_C_dom_sf"/>
</dbReference>
<dbReference type="InterPro" id="IPR016166">
    <property type="entry name" value="FAD-bd_PCMH"/>
</dbReference>
<dbReference type="InterPro" id="IPR036318">
    <property type="entry name" value="FAD-bd_PCMH-like_sf"/>
</dbReference>
<dbReference type="InterPro" id="IPR016167">
    <property type="entry name" value="FAD-bd_PCMH_sub1"/>
</dbReference>
<dbReference type="InterPro" id="IPR016169">
    <property type="entry name" value="FAD-bd_PCMH_sub2"/>
</dbReference>
<dbReference type="InterPro" id="IPR002346">
    <property type="entry name" value="Mopterin_DH_FAD-bd"/>
</dbReference>
<dbReference type="InterPro" id="IPR022407">
    <property type="entry name" value="OxRdtase_Mopterin_BS"/>
</dbReference>
<dbReference type="NCBIfam" id="TIGR02969">
    <property type="entry name" value="mam_aldehyde_ox"/>
    <property type="match status" value="1"/>
</dbReference>
<dbReference type="PANTHER" id="PTHR45444">
    <property type="entry name" value="XANTHINE DEHYDROGENASE"/>
    <property type="match status" value="1"/>
</dbReference>
<dbReference type="PANTHER" id="PTHR45444:SF3">
    <property type="entry name" value="XANTHINE DEHYDROGENASE"/>
    <property type="match status" value="1"/>
</dbReference>
<dbReference type="Pfam" id="PF01315">
    <property type="entry name" value="Ald_Xan_dh_C"/>
    <property type="match status" value="1"/>
</dbReference>
<dbReference type="Pfam" id="PF03450">
    <property type="entry name" value="CO_deh_flav_C"/>
    <property type="match status" value="1"/>
</dbReference>
<dbReference type="Pfam" id="PF00941">
    <property type="entry name" value="FAD_binding_5"/>
    <property type="match status" value="1"/>
</dbReference>
<dbReference type="Pfam" id="PF00111">
    <property type="entry name" value="Fer2"/>
    <property type="match status" value="1"/>
</dbReference>
<dbReference type="Pfam" id="PF01799">
    <property type="entry name" value="Fer2_2"/>
    <property type="match status" value="1"/>
</dbReference>
<dbReference type="Pfam" id="PF02738">
    <property type="entry name" value="MoCoBD_1"/>
    <property type="match status" value="1"/>
</dbReference>
<dbReference type="Pfam" id="PF20256">
    <property type="entry name" value="MoCoBD_2"/>
    <property type="match status" value="1"/>
</dbReference>
<dbReference type="PIRSF" id="PIRSF000127">
    <property type="entry name" value="Xanthine_DH"/>
    <property type="match status" value="1"/>
</dbReference>
<dbReference type="SMART" id="SM01008">
    <property type="entry name" value="Ald_Xan_dh_C"/>
    <property type="match status" value="1"/>
</dbReference>
<dbReference type="SMART" id="SM01092">
    <property type="entry name" value="CO_deh_flav_C"/>
    <property type="match status" value="1"/>
</dbReference>
<dbReference type="SUPFAM" id="SSF54292">
    <property type="entry name" value="2Fe-2S ferredoxin-like"/>
    <property type="match status" value="1"/>
</dbReference>
<dbReference type="SUPFAM" id="SSF55447">
    <property type="entry name" value="CO dehydrogenase flavoprotein C-terminal domain-like"/>
    <property type="match status" value="1"/>
</dbReference>
<dbReference type="SUPFAM" id="SSF47741">
    <property type="entry name" value="CO dehydrogenase ISP C-domain like"/>
    <property type="match status" value="1"/>
</dbReference>
<dbReference type="SUPFAM" id="SSF54665">
    <property type="entry name" value="CO dehydrogenase molybdoprotein N-domain-like"/>
    <property type="match status" value="1"/>
</dbReference>
<dbReference type="SUPFAM" id="SSF56176">
    <property type="entry name" value="FAD-binding/transporter-associated domain-like"/>
    <property type="match status" value="1"/>
</dbReference>
<dbReference type="SUPFAM" id="SSF56003">
    <property type="entry name" value="Molybdenum cofactor-binding domain"/>
    <property type="match status" value="1"/>
</dbReference>
<dbReference type="PROSITE" id="PS00197">
    <property type="entry name" value="2FE2S_FER_1"/>
    <property type="match status" value="1"/>
</dbReference>
<dbReference type="PROSITE" id="PS51085">
    <property type="entry name" value="2FE2S_FER_2"/>
    <property type="match status" value="1"/>
</dbReference>
<dbReference type="PROSITE" id="PS51387">
    <property type="entry name" value="FAD_PCMH"/>
    <property type="match status" value="1"/>
</dbReference>
<dbReference type="PROSITE" id="PS00559">
    <property type="entry name" value="MOLYBDOPTERIN_EUK"/>
    <property type="match status" value="1"/>
</dbReference>